<dbReference type="EMBL" id="BC102134">
    <property type="protein sequence ID" value="AAI02135.1"/>
    <property type="molecule type" value="mRNA"/>
</dbReference>
<dbReference type="RefSeq" id="NP_001029633.1">
    <property type="nucleotide sequence ID" value="NM_001034461.2"/>
</dbReference>
<dbReference type="RefSeq" id="XP_005206435.1">
    <property type="nucleotide sequence ID" value="XM_005206378.5"/>
</dbReference>
<dbReference type="RefSeq" id="XP_005206436.1">
    <property type="nucleotide sequence ID" value="XM_005206379.5"/>
</dbReference>
<dbReference type="RefSeq" id="XP_005206437.1">
    <property type="nucleotide sequence ID" value="XM_005206380.5"/>
</dbReference>
<dbReference type="FunCoup" id="Q3T144">
    <property type="interactions" value="1694"/>
</dbReference>
<dbReference type="STRING" id="9913.ENSBTAP00000000578"/>
<dbReference type="PaxDb" id="9913-ENSBTAP00000000578"/>
<dbReference type="GeneID" id="514271"/>
<dbReference type="KEGG" id="bta:514271"/>
<dbReference type="CTD" id="79022"/>
<dbReference type="VEuPathDB" id="HostDB:ENSBTAG00000000454"/>
<dbReference type="eggNOG" id="ENOG502QQ43">
    <property type="taxonomic scope" value="Eukaryota"/>
</dbReference>
<dbReference type="HOGENOM" id="CLU_089337_0_0_1"/>
<dbReference type="InParanoid" id="Q3T144"/>
<dbReference type="OMA" id="PYVYAFC"/>
<dbReference type="OrthoDB" id="508875at2759"/>
<dbReference type="TreeFam" id="TF328907"/>
<dbReference type="Proteomes" id="UP000009136">
    <property type="component" value="Chromosome 5"/>
</dbReference>
<dbReference type="Bgee" id="ENSBTAG00000000454">
    <property type="expression patterns" value="Expressed in caput epididymis and 105 other cell types or tissues"/>
</dbReference>
<dbReference type="GO" id="GO:0005789">
    <property type="term" value="C:endoplasmic reticulum membrane"/>
    <property type="evidence" value="ECO:0007669"/>
    <property type="project" value="UniProtKB-SubCell"/>
</dbReference>
<dbReference type="Gene3D" id="2.60.40.1820">
    <property type="match status" value="1"/>
</dbReference>
<dbReference type="InterPro" id="IPR009790">
    <property type="entry name" value="TMEM106"/>
</dbReference>
<dbReference type="InterPro" id="IPR048509">
    <property type="entry name" value="TMEM106_C"/>
</dbReference>
<dbReference type="InterPro" id="IPR048511">
    <property type="entry name" value="TMEM106_N"/>
</dbReference>
<dbReference type="PANTHER" id="PTHR28556">
    <property type="entry name" value="TRANSMEMBRANE PROTEIN 106B"/>
    <property type="match status" value="1"/>
</dbReference>
<dbReference type="PANTHER" id="PTHR28556:SF5">
    <property type="entry name" value="TRANSMEMBRANE PROTEIN 106C"/>
    <property type="match status" value="1"/>
</dbReference>
<dbReference type="Pfam" id="PF07092">
    <property type="entry name" value="TMEM106"/>
    <property type="match status" value="1"/>
</dbReference>
<dbReference type="Pfam" id="PF21002">
    <property type="entry name" value="TMEM106_N"/>
    <property type="match status" value="1"/>
</dbReference>
<dbReference type="SUPFAM" id="SSF117070">
    <property type="entry name" value="LEA14-like"/>
    <property type="match status" value="1"/>
</dbReference>
<gene>
    <name type="primary">TMEM106C</name>
</gene>
<feature type="initiator methionine" description="Removed" evidence="2">
    <location>
        <position position="1"/>
    </location>
</feature>
<feature type="chain" id="PRO_0000243899" description="Transmembrane protein 106C">
    <location>
        <begin position="2"/>
        <end position="249"/>
    </location>
</feature>
<feature type="transmembrane region" description="Helical" evidence="3">
    <location>
        <begin position="86"/>
        <end position="106"/>
    </location>
</feature>
<feature type="transmembrane region" description="Helical" evidence="3">
    <location>
        <begin position="197"/>
        <end position="217"/>
    </location>
</feature>
<feature type="region of interest" description="Disordered" evidence="4">
    <location>
        <begin position="1"/>
        <end position="26"/>
    </location>
</feature>
<feature type="lipid moiety-binding region" description="N-myristoyl glycine" evidence="2">
    <location>
        <position position="2"/>
    </location>
</feature>
<evidence type="ECO:0000250" key="1"/>
<evidence type="ECO:0000250" key="2">
    <source>
        <dbReference type="UniProtKB" id="Q9BVX2"/>
    </source>
</evidence>
<evidence type="ECO:0000255" key="3"/>
<evidence type="ECO:0000256" key="4">
    <source>
        <dbReference type="SAM" id="MobiDB-lite"/>
    </source>
</evidence>
<evidence type="ECO:0000305" key="5"/>
<sequence>MGSRHSTYAHRPFSKRRKADDTEDSLAEREQQEAIAQFPYVEFTGRDSITCLTCQGTGYIPEQVNELVALIPHSDQRLRPQRTKQYVLLSILLCLLASGLVVFFLFPHSVLVDDDGIKVVKVTFDEQRSLVILAITATLKIRNSNFYSVAVTSLSSEVQYMNTVVGSYTTTNISLIPPRSEHLVNFTAKAEMGGPYSYVYFFCTLPYIGVHNVVVFVRTSVKISYIGHVTQSSLETHHYVDCGVNSTAV</sequence>
<reference key="1">
    <citation type="submission" date="2005-08" db="EMBL/GenBank/DDBJ databases">
        <authorList>
            <consortium name="NIH - Mammalian Gene Collection (MGC) project"/>
        </authorList>
    </citation>
    <scope>NUCLEOTIDE SEQUENCE [LARGE SCALE MRNA]</scope>
    <source>
        <strain>Crossbred X Angus</strain>
        <tissue>Ileum</tissue>
    </source>
</reference>
<accession>Q3T144</accession>
<name>T106C_BOVIN</name>
<keyword id="KW-0256">Endoplasmic reticulum</keyword>
<keyword id="KW-0449">Lipoprotein</keyword>
<keyword id="KW-0472">Membrane</keyword>
<keyword id="KW-0519">Myristate</keyword>
<keyword id="KW-1185">Reference proteome</keyword>
<keyword id="KW-0812">Transmembrane</keyword>
<keyword id="KW-1133">Transmembrane helix</keyword>
<protein>
    <recommendedName>
        <fullName>Transmembrane protein 106C</fullName>
    </recommendedName>
</protein>
<proteinExistence type="evidence at transcript level"/>
<organism>
    <name type="scientific">Bos taurus</name>
    <name type="common">Bovine</name>
    <dbReference type="NCBI Taxonomy" id="9913"/>
    <lineage>
        <taxon>Eukaryota</taxon>
        <taxon>Metazoa</taxon>
        <taxon>Chordata</taxon>
        <taxon>Craniata</taxon>
        <taxon>Vertebrata</taxon>
        <taxon>Euteleostomi</taxon>
        <taxon>Mammalia</taxon>
        <taxon>Eutheria</taxon>
        <taxon>Laurasiatheria</taxon>
        <taxon>Artiodactyla</taxon>
        <taxon>Ruminantia</taxon>
        <taxon>Pecora</taxon>
        <taxon>Bovidae</taxon>
        <taxon>Bovinae</taxon>
        <taxon>Bos</taxon>
    </lineage>
</organism>
<comment type="subunit">
    <text evidence="2">Interacts with TMEM106B.</text>
</comment>
<comment type="subcellular location">
    <subcellularLocation>
        <location evidence="1">Endoplasmic reticulum membrane</location>
        <topology evidence="1">Multi-pass membrane protein</topology>
    </subcellularLocation>
    <subcellularLocation>
        <location evidence="2">Membrane</location>
        <topology evidence="2">Lipid-anchor</topology>
    </subcellularLocation>
</comment>
<comment type="similarity">
    <text evidence="5">Belongs to the TMEM106 family.</text>
</comment>